<gene>
    <name type="ordered locus">VCM66_A0786</name>
</gene>
<sequence length="109" mass="12420">MLDELRCEACSAGAIGLTSEEQQQLLSELDGWALIHRDGIAQLEKRYRFKNFKQAWAFSNQIAELAEQEFHNPAILLEWGNVTVTWWSHSIKGLHKNDFICAAKCDALT</sequence>
<name>PHS_VIBCM</name>
<proteinExistence type="inferred from homology"/>
<reference key="1">
    <citation type="journal article" date="2008" name="PLoS ONE">
        <title>A recalibrated molecular clock and independent origins for the cholera pandemic clones.</title>
        <authorList>
            <person name="Feng L."/>
            <person name="Reeves P.R."/>
            <person name="Lan R."/>
            <person name="Ren Y."/>
            <person name="Gao C."/>
            <person name="Zhou Z."/>
            <person name="Ren Y."/>
            <person name="Cheng J."/>
            <person name="Wang W."/>
            <person name="Wang J."/>
            <person name="Qian W."/>
            <person name="Li D."/>
            <person name="Wang L."/>
        </authorList>
    </citation>
    <scope>NUCLEOTIDE SEQUENCE [LARGE SCALE GENOMIC DNA]</scope>
    <source>
        <strain>M66-2</strain>
    </source>
</reference>
<dbReference type="EC" id="4.2.1.96" evidence="1"/>
<dbReference type="EMBL" id="CP001234">
    <property type="protein sequence ID" value="ACP07746.1"/>
    <property type="molecule type" value="Genomic_DNA"/>
</dbReference>
<dbReference type="RefSeq" id="WP_000883446.1">
    <property type="nucleotide sequence ID" value="NC_012580.1"/>
</dbReference>
<dbReference type="SMR" id="C3LW91"/>
<dbReference type="KEGG" id="vcm:VCM66_A0786"/>
<dbReference type="HOGENOM" id="CLU_081974_2_2_6"/>
<dbReference type="Proteomes" id="UP000001217">
    <property type="component" value="Chromosome II"/>
</dbReference>
<dbReference type="GO" id="GO:0008124">
    <property type="term" value="F:4-alpha-hydroxytetrahydrobiopterin dehydratase activity"/>
    <property type="evidence" value="ECO:0007669"/>
    <property type="project" value="UniProtKB-UniRule"/>
</dbReference>
<dbReference type="GO" id="GO:0006729">
    <property type="term" value="P:tetrahydrobiopterin biosynthetic process"/>
    <property type="evidence" value="ECO:0007669"/>
    <property type="project" value="InterPro"/>
</dbReference>
<dbReference type="CDD" id="cd00913">
    <property type="entry name" value="PCD_DCoH_subfamily_a"/>
    <property type="match status" value="1"/>
</dbReference>
<dbReference type="FunFam" id="3.30.1360.20:FF:000002">
    <property type="entry name" value="Putative pterin-4-alpha-carbinolamine dehydratase"/>
    <property type="match status" value="1"/>
</dbReference>
<dbReference type="Gene3D" id="3.30.1360.20">
    <property type="entry name" value="Transcriptional coactivator/pterin dehydratase"/>
    <property type="match status" value="1"/>
</dbReference>
<dbReference type="HAMAP" id="MF_00434">
    <property type="entry name" value="Pterin_4_alpha"/>
    <property type="match status" value="1"/>
</dbReference>
<dbReference type="InterPro" id="IPR036428">
    <property type="entry name" value="PCD_sf"/>
</dbReference>
<dbReference type="InterPro" id="IPR050376">
    <property type="entry name" value="Pterin-4-alpha-carb_dehyd"/>
</dbReference>
<dbReference type="InterPro" id="IPR001533">
    <property type="entry name" value="Pterin_deHydtase"/>
</dbReference>
<dbReference type="NCBIfam" id="NF002016">
    <property type="entry name" value="PRK00823.1-1"/>
    <property type="match status" value="1"/>
</dbReference>
<dbReference type="PANTHER" id="PTHR42805">
    <property type="entry name" value="PTERIN-4-ALPHA-CARBINOLAMINE DEHYDRATASE-RELATED"/>
    <property type="match status" value="1"/>
</dbReference>
<dbReference type="PANTHER" id="PTHR42805:SF1">
    <property type="entry name" value="PTERIN-4-ALPHA-CARBINOLAMINE DEHYDRATASE-RELATED"/>
    <property type="match status" value="1"/>
</dbReference>
<dbReference type="Pfam" id="PF01329">
    <property type="entry name" value="Pterin_4a"/>
    <property type="match status" value="1"/>
</dbReference>
<dbReference type="SUPFAM" id="SSF55248">
    <property type="entry name" value="PCD-like"/>
    <property type="match status" value="1"/>
</dbReference>
<feature type="chain" id="PRO_1000192942" description="Putative pterin-4-alpha-carbinolamine dehydratase">
    <location>
        <begin position="1"/>
        <end position="109"/>
    </location>
</feature>
<accession>C3LW91</accession>
<protein>
    <recommendedName>
        <fullName evidence="1">Putative pterin-4-alpha-carbinolamine dehydratase</fullName>
        <shortName evidence="1">PHS</shortName>
        <ecNumber evidence="1">4.2.1.96</ecNumber>
    </recommendedName>
    <alternativeName>
        <fullName evidence="1">4-alpha-hydroxy-tetrahydropterin dehydratase</fullName>
    </alternativeName>
    <alternativeName>
        <fullName evidence="1">Pterin carbinolamine dehydratase</fullName>
        <shortName evidence="1">PCD</shortName>
    </alternativeName>
</protein>
<keyword id="KW-0456">Lyase</keyword>
<evidence type="ECO:0000255" key="1">
    <source>
        <dbReference type="HAMAP-Rule" id="MF_00434"/>
    </source>
</evidence>
<organism>
    <name type="scientific">Vibrio cholerae serotype O1 (strain M66-2)</name>
    <dbReference type="NCBI Taxonomy" id="579112"/>
    <lineage>
        <taxon>Bacteria</taxon>
        <taxon>Pseudomonadati</taxon>
        <taxon>Pseudomonadota</taxon>
        <taxon>Gammaproteobacteria</taxon>
        <taxon>Vibrionales</taxon>
        <taxon>Vibrionaceae</taxon>
        <taxon>Vibrio</taxon>
    </lineage>
</organism>
<comment type="catalytic activity">
    <reaction evidence="1">
        <text>(4aS,6R)-4a-hydroxy-L-erythro-5,6,7,8-tetrahydrobiopterin = (6R)-L-erythro-6,7-dihydrobiopterin + H2O</text>
        <dbReference type="Rhea" id="RHEA:11920"/>
        <dbReference type="ChEBI" id="CHEBI:15377"/>
        <dbReference type="ChEBI" id="CHEBI:15642"/>
        <dbReference type="ChEBI" id="CHEBI:43120"/>
        <dbReference type="EC" id="4.2.1.96"/>
    </reaction>
</comment>
<comment type="similarity">
    <text evidence="1">Belongs to the pterin-4-alpha-carbinolamine dehydratase family.</text>
</comment>